<proteinExistence type="evidence at protein level"/>
<feature type="chain" id="PRO_0000324628" description="Inositol-3-phosphate synthase 1">
    <location>
        <begin position="1"/>
        <end position="558"/>
    </location>
</feature>
<feature type="region of interest" description="Disordered" evidence="2">
    <location>
        <begin position="537"/>
        <end position="558"/>
    </location>
</feature>
<feature type="binding site" evidence="1">
    <location>
        <position position="67"/>
    </location>
    <ligand>
        <name>NAD(+)</name>
        <dbReference type="ChEBI" id="CHEBI:57540"/>
    </ligand>
</feature>
<feature type="binding site" evidence="1">
    <location>
        <position position="68"/>
    </location>
    <ligand>
        <name>NAD(+)</name>
        <dbReference type="ChEBI" id="CHEBI:57540"/>
    </ligand>
</feature>
<feature type="binding site" evidence="1">
    <location>
        <position position="69"/>
    </location>
    <ligand>
        <name>NAD(+)</name>
        <dbReference type="ChEBI" id="CHEBI:57540"/>
    </ligand>
</feature>
<feature type="binding site" evidence="1">
    <location>
        <position position="70"/>
    </location>
    <ligand>
        <name>NAD(+)</name>
        <dbReference type="ChEBI" id="CHEBI:57540"/>
    </ligand>
</feature>
<feature type="binding site" evidence="1">
    <location>
        <position position="141"/>
    </location>
    <ligand>
        <name>NAD(+)</name>
        <dbReference type="ChEBI" id="CHEBI:57540"/>
    </ligand>
</feature>
<feature type="binding site" evidence="1">
    <location>
        <position position="177"/>
    </location>
    <ligand>
        <name>NAD(+)</name>
        <dbReference type="ChEBI" id="CHEBI:57540"/>
    </ligand>
</feature>
<feature type="binding site" evidence="1">
    <location>
        <position position="178"/>
    </location>
    <ligand>
        <name>NAD(+)</name>
        <dbReference type="ChEBI" id="CHEBI:57540"/>
    </ligand>
</feature>
<feature type="binding site" evidence="1">
    <location>
        <position position="188"/>
    </location>
    <ligand>
        <name>NAD(+)</name>
        <dbReference type="ChEBI" id="CHEBI:57540"/>
    </ligand>
</feature>
<feature type="binding site" evidence="1">
    <location>
        <position position="191"/>
    </location>
    <ligand>
        <name>NAD(+)</name>
        <dbReference type="ChEBI" id="CHEBI:57540"/>
    </ligand>
</feature>
<feature type="binding site" evidence="1">
    <location>
        <position position="228"/>
    </location>
    <ligand>
        <name>NAD(+)</name>
        <dbReference type="ChEBI" id="CHEBI:57540"/>
    </ligand>
</feature>
<feature type="binding site" evidence="1">
    <location>
        <position position="229"/>
    </location>
    <ligand>
        <name>NAD(+)</name>
        <dbReference type="ChEBI" id="CHEBI:57540"/>
    </ligand>
</feature>
<feature type="binding site" evidence="1">
    <location>
        <position position="230"/>
    </location>
    <ligand>
        <name>NAD(+)</name>
        <dbReference type="ChEBI" id="CHEBI:57540"/>
    </ligand>
</feature>
<feature type="binding site" evidence="1">
    <location>
        <position position="231"/>
    </location>
    <ligand>
        <name>NAD(+)</name>
        <dbReference type="ChEBI" id="CHEBI:57540"/>
    </ligand>
</feature>
<feature type="binding site" evidence="1">
    <location>
        <position position="278"/>
    </location>
    <ligand>
        <name>NAD(+)</name>
        <dbReference type="ChEBI" id="CHEBI:57540"/>
    </ligand>
</feature>
<feature type="binding site" evidence="1">
    <location>
        <position position="279"/>
    </location>
    <ligand>
        <name>NAD(+)</name>
        <dbReference type="ChEBI" id="CHEBI:57540"/>
    </ligand>
</feature>
<feature type="binding site" evidence="1">
    <location>
        <position position="303"/>
    </location>
    <ligand>
        <name>NAD(+)</name>
        <dbReference type="ChEBI" id="CHEBI:57540"/>
    </ligand>
</feature>
<feature type="binding site" evidence="1">
    <location>
        <position position="306"/>
    </location>
    <ligand>
        <name>NAD(+)</name>
        <dbReference type="ChEBI" id="CHEBI:57540"/>
    </ligand>
</feature>
<feature type="binding site" evidence="1">
    <location>
        <position position="337"/>
    </location>
    <ligand>
        <name>NAD(+)</name>
        <dbReference type="ChEBI" id="CHEBI:57540"/>
    </ligand>
</feature>
<feature type="binding site" evidence="1">
    <location>
        <position position="338"/>
    </location>
    <ligand>
        <name>NAD(+)</name>
        <dbReference type="ChEBI" id="CHEBI:57540"/>
    </ligand>
</feature>
<feature type="binding site" evidence="1">
    <location>
        <position position="339"/>
    </location>
    <ligand>
        <name>NAD(+)</name>
        <dbReference type="ChEBI" id="CHEBI:57540"/>
    </ligand>
</feature>
<feature type="binding site" evidence="1">
    <location>
        <position position="352"/>
    </location>
    <ligand>
        <name>NAD(+)</name>
        <dbReference type="ChEBI" id="CHEBI:57540"/>
    </ligand>
</feature>
<feature type="binding site" evidence="1">
    <location>
        <position position="390"/>
    </location>
    <ligand>
        <name>NAD(+)</name>
        <dbReference type="ChEBI" id="CHEBI:57540"/>
    </ligand>
</feature>
<feature type="binding site" evidence="1">
    <location>
        <position position="391"/>
    </location>
    <ligand>
        <name>NAD(+)</name>
        <dbReference type="ChEBI" id="CHEBI:57540"/>
    </ligand>
</feature>
<feature type="binding site" evidence="1">
    <location>
        <position position="419"/>
    </location>
    <ligand>
        <name>NAD(+)</name>
        <dbReference type="ChEBI" id="CHEBI:57540"/>
    </ligand>
</feature>
<feature type="binding site" evidence="1">
    <location>
        <position position="420"/>
    </location>
    <ligand>
        <name>NAD(+)</name>
        <dbReference type="ChEBI" id="CHEBI:57540"/>
    </ligand>
</feature>
<feature type="modified residue" description="Phosphoserine" evidence="8">
    <location>
        <position position="279"/>
    </location>
</feature>
<feature type="modified residue" description="Phosphoserine" evidence="8">
    <location>
        <position position="357"/>
    </location>
</feature>
<feature type="splice variant" id="VSP_032324" description="In isoform 2." evidence="10">
    <location>
        <begin position="1"/>
        <end position="128"/>
    </location>
</feature>
<feature type="splice variant" id="VSP_046065" description="In isoform 3." evidence="9">
    <location>
        <begin position="40"/>
        <end position="93"/>
    </location>
</feature>
<feature type="mutagenesis site" description="Decreases activity." evidence="8">
    <original>S</original>
    <variation>A</variation>
    <variation>D</variation>
    <location>
        <position position="177"/>
    </location>
</feature>
<feature type="mutagenesis site" description="Decreases activity." evidence="8">
    <original>S</original>
    <variation>A</variation>
    <variation>D</variation>
    <location>
        <position position="279"/>
    </location>
</feature>
<feature type="mutagenesis site" description="Decreases activity." evidence="8">
    <original>S</original>
    <variation>D</variation>
    <location>
        <position position="357"/>
    </location>
</feature>
<feature type="sequence conflict" description="In Ref. 3; AAP97151." evidence="11" ref="3">
    <original>G</original>
    <variation>S</variation>
    <location>
        <position position="17"/>
    </location>
</feature>
<feature type="sequence conflict" description="In Ref. 3; AAP97151." evidence="11" ref="3">
    <original>E</original>
    <variation>K</variation>
    <location>
        <position position="35"/>
    </location>
</feature>
<feature type="sequence conflict" description="In Ref. 3; AAP97151." evidence="11" ref="3">
    <original>P</original>
    <variation>T</variation>
    <location>
        <position position="57"/>
    </location>
</feature>
<feature type="sequence conflict" description="In Ref. 3; AAP97151." evidence="11" ref="3">
    <original>R</original>
    <variation>Q</variation>
    <location>
        <position position="82"/>
    </location>
</feature>
<feature type="sequence conflict" description="In Ref. 3; AAP97151." evidence="11" ref="3">
    <location>
        <position position="91"/>
    </location>
</feature>
<feature type="sequence conflict" description="In Ref. 1; AAG35698." evidence="11" ref="1">
    <original>K</original>
    <variation>N</variation>
    <location>
        <position position="155"/>
    </location>
</feature>
<feature type="sequence conflict" description="In Ref. 3; AAP97151." evidence="11" ref="3">
    <original>D</original>
    <variation>N</variation>
    <location>
        <position position="193"/>
    </location>
</feature>
<feature type="sequence conflict" description="In Ref. 8; AAH66902." evidence="11" ref="8">
    <original>P</original>
    <variation>Q</variation>
    <location>
        <position position="368"/>
    </location>
</feature>
<feature type="sequence conflict" description="In Ref. 8; AAH66902." evidence="11" ref="8">
    <original>S</original>
    <variation>G</variation>
    <location>
        <position position="392"/>
    </location>
</feature>
<feature type="sequence conflict" description="In Ref. 4; BAG52493." evidence="11" ref="4">
    <original>H</original>
    <variation>R</variation>
    <location>
        <position position="414"/>
    </location>
</feature>
<feature type="sequence conflict" description="In Ref. 8; AAH66902." evidence="11" ref="8">
    <original>P</original>
    <variation>R</variation>
    <location>
        <position position="471"/>
    </location>
</feature>
<feature type="sequence conflict" description="In Ref. 4; BAA91626." evidence="11" ref="4">
    <original>S</original>
    <variation>C</variation>
    <location>
        <position position="514"/>
    </location>
</feature>
<accession>Q9NPH2</accession>
<accession>B3KRT1</accession>
<accession>G5E9U0</accession>
<accession>Q6NXT5</accession>
<accession>Q7Z525</accession>
<accession>Q9BT65</accession>
<accession>Q9H2Y2</accession>
<accession>Q9NSU0</accession>
<accession>Q9NVW7</accession>
<dbReference type="EC" id="5.5.1.4" evidence="4 8"/>
<dbReference type="EMBL" id="AF207640">
    <property type="protein sequence ID" value="AAG35698.1"/>
    <property type="molecule type" value="mRNA"/>
</dbReference>
<dbReference type="EMBL" id="AF220530">
    <property type="protein sequence ID" value="AAF26444.1"/>
    <property type="molecule type" value="mRNA"/>
</dbReference>
<dbReference type="EMBL" id="AF220259">
    <property type="protein sequence ID" value="AAF26739.1"/>
    <property type="molecule type" value="Genomic_DNA"/>
</dbReference>
<dbReference type="EMBL" id="AF220250">
    <property type="protein sequence ID" value="AAF26739.1"/>
    <property type="status" value="JOINED"/>
    <property type="molecule type" value="Genomic_DNA"/>
</dbReference>
<dbReference type="EMBL" id="AF220251">
    <property type="protein sequence ID" value="AAF26739.1"/>
    <property type="status" value="JOINED"/>
    <property type="molecule type" value="Genomic_DNA"/>
</dbReference>
<dbReference type="EMBL" id="AF220252">
    <property type="protein sequence ID" value="AAF26739.1"/>
    <property type="status" value="JOINED"/>
    <property type="molecule type" value="Genomic_DNA"/>
</dbReference>
<dbReference type="EMBL" id="AF220253">
    <property type="protein sequence ID" value="AAF26739.1"/>
    <property type="status" value="JOINED"/>
    <property type="molecule type" value="Genomic_DNA"/>
</dbReference>
<dbReference type="EMBL" id="AF220254">
    <property type="protein sequence ID" value="AAF26739.1"/>
    <property type="status" value="JOINED"/>
    <property type="molecule type" value="Genomic_DNA"/>
</dbReference>
<dbReference type="EMBL" id="AF220255">
    <property type="protein sequence ID" value="AAF26739.1"/>
    <property type="status" value="JOINED"/>
    <property type="molecule type" value="Genomic_DNA"/>
</dbReference>
<dbReference type="EMBL" id="AF220256">
    <property type="protein sequence ID" value="AAF26739.1"/>
    <property type="status" value="JOINED"/>
    <property type="molecule type" value="Genomic_DNA"/>
</dbReference>
<dbReference type="EMBL" id="AF220257">
    <property type="protein sequence ID" value="AAF26739.1"/>
    <property type="status" value="JOINED"/>
    <property type="molecule type" value="Genomic_DNA"/>
</dbReference>
<dbReference type="EMBL" id="AF220258">
    <property type="protein sequence ID" value="AAF26739.1"/>
    <property type="status" value="JOINED"/>
    <property type="molecule type" value="Genomic_DNA"/>
</dbReference>
<dbReference type="EMBL" id="AF086921">
    <property type="protein sequence ID" value="AAP97151.1"/>
    <property type="status" value="ALT_FRAME"/>
    <property type="molecule type" value="mRNA"/>
</dbReference>
<dbReference type="EMBL" id="AK001325">
    <property type="protein sequence ID" value="BAA91626.1"/>
    <property type="molecule type" value="mRNA"/>
</dbReference>
<dbReference type="EMBL" id="AK021526">
    <property type="protein sequence ID" value="BAB13837.1"/>
    <property type="molecule type" value="mRNA"/>
</dbReference>
<dbReference type="EMBL" id="AK092179">
    <property type="protein sequence ID" value="BAG52493.1"/>
    <property type="molecule type" value="mRNA"/>
</dbReference>
<dbReference type="EMBL" id="AL137749">
    <property type="protein sequence ID" value="CAB70904.1"/>
    <property type="molecule type" value="mRNA"/>
</dbReference>
<dbReference type="EMBL" id="AC008397">
    <property type="status" value="NOT_ANNOTATED_CDS"/>
    <property type="molecule type" value="Genomic_DNA"/>
</dbReference>
<dbReference type="EMBL" id="CH471106">
    <property type="protein sequence ID" value="EAW84703.1"/>
    <property type="molecule type" value="Genomic_DNA"/>
</dbReference>
<dbReference type="EMBL" id="CH471106">
    <property type="protein sequence ID" value="EAW84705.1"/>
    <property type="molecule type" value="Genomic_DNA"/>
</dbReference>
<dbReference type="EMBL" id="BC004320">
    <property type="protein sequence ID" value="AAH04320.1"/>
    <property type="molecule type" value="mRNA"/>
</dbReference>
<dbReference type="EMBL" id="BC018952">
    <property type="protein sequence ID" value="AAH18952.1"/>
    <property type="molecule type" value="mRNA"/>
</dbReference>
<dbReference type="EMBL" id="BC066902">
    <property type="protein sequence ID" value="AAH66902.1"/>
    <property type="molecule type" value="mRNA"/>
</dbReference>
<dbReference type="CCDS" id="CCDS12379.1">
    <molecule id="Q9NPH2-1"/>
</dbReference>
<dbReference type="CCDS" id="CCDS54234.1">
    <molecule id="Q9NPH2-3"/>
</dbReference>
<dbReference type="CCDS" id="CCDS62603.1">
    <molecule id="Q9NPH2-2"/>
</dbReference>
<dbReference type="PIR" id="T46317">
    <property type="entry name" value="T46317"/>
</dbReference>
<dbReference type="RefSeq" id="NP_001164409.1">
    <molecule id="Q9NPH2-3"/>
    <property type="nucleotide sequence ID" value="NM_001170938.2"/>
</dbReference>
<dbReference type="RefSeq" id="NP_001240318.1">
    <molecule id="Q9NPH2-2"/>
    <property type="nucleotide sequence ID" value="NM_001253389.2"/>
</dbReference>
<dbReference type="RefSeq" id="NP_057452.1">
    <molecule id="Q9NPH2-1"/>
    <property type="nucleotide sequence ID" value="NM_016368.5"/>
</dbReference>
<dbReference type="SMR" id="Q9NPH2"/>
<dbReference type="BioGRID" id="119562">
    <property type="interactions" value="74"/>
</dbReference>
<dbReference type="FunCoup" id="Q9NPH2">
    <property type="interactions" value="1066"/>
</dbReference>
<dbReference type="IntAct" id="Q9NPH2">
    <property type="interactions" value="28"/>
</dbReference>
<dbReference type="MINT" id="Q9NPH2"/>
<dbReference type="STRING" id="9606.ENSP00000337746"/>
<dbReference type="DrugBank" id="DB01840">
    <property type="generic name" value="2-Deoxy-D-Glucitol 6-(E)-Vinylhomophosphonate"/>
</dbReference>
<dbReference type="DrugBank" id="DB04516">
    <property type="generic name" value="2-Deoxy-Glucitol-6-Phosphate"/>
</dbReference>
<dbReference type="DrugBank" id="DB09462">
    <property type="generic name" value="Glycerin"/>
</dbReference>
<dbReference type="GlyGen" id="Q9NPH2">
    <property type="glycosylation" value="1 site, 1 O-linked glycan (1 site)"/>
</dbReference>
<dbReference type="iPTMnet" id="Q9NPH2"/>
<dbReference type="PhosphoSitePlus" id="Q9NPH2"/>
<dbReference type="BioMuta" id="ISYNA1"/>
<dbReference type="DMDM" id="74734304"/>
<dbReference type="REPRODUCTION-2DPAGE" id="IPI00549569"/>
<dbReference type="CPTAC" id="CPTAC-227"/>
<dbReference type="CPTAC" id="CPTAC-228"/>
<dbReference type="jPOST" id="Q9NPH2"/>
<dbReference type="MassIVE" id="Q9NPH2"/>
<dbReference type="PaxDb" id="9606-ENSP00000337746"/>
<dbReference type="PeptideAtlas" id="Q9NPH2"/>
<dbReference type="ProteomicsDB" id="34039"/>
<dbReference type="ProteomicsDB" id="81997">
    <molecule id="Q9NPH2-1"/>
</dbReference>
<dbReference type="ProteomicsDB" id="81998">
    <molecule id="Q9NPH2-2"/>
</dbReference>
<dbReference type="Pumba" id="Q9NPH2"/>
<dbReference type="Antibodypedia" id="28044">
    <property type="antibodies" value="93 antibodies from 23 providers"/>
</dbReference>
<dbReference type="DNASU" id="51477"/>
<dbReference type="Ensembl" id="ENST00000338128.13">
    <molecule id="Q9NPH2-1"/>
    <property type="protein sequence ID" value="ENSP00000337746.7"/>
    <property type="gene ID" value="ENSG00000105655.19"/>
</dbReference>
<dbReference type="Ensembl" id="ENST00000457269.8">
    <molecule id="Q9NPH2-3"/>
    <property type="protein sequence ID" value="ENSP00000415458.3"/>
    <property type="gene ID" value="ENSG00000105655.19"/>
</dbReference>
<dbReference type="Ensembl" id="ENST00000578963.5">
    <molecule id="Q9NPH2-2"/>
    <property type="protein sequence ID" value="ENSP00000475677.1"/>
    <property type="gene ID" value="ENSG00000105655.19"/>
</dbReference>
<dbReference type="GeneID" id="51477"/>
<dbReference type="KEGG" id="hsa:51477"/>
<dbReference type="MANE-Select" id="ENST00000338128.13">
    <property type="protein sequence ID" value="ENSP00000337746.7"/>
    <property type="RefSeq nucleotide sequence ID" value="NM_016368.5"/>
    <property type="RefSeq protein sequence ID" value="NP_057452.1"/>
</dbReference>
<dbReference type="UCSC" id="uc002nja.3">
    <molecule id="Q9NPH2-1"/>
    <property type="organism name" value="human"/>
</dbReference>
<dbReference type="AGR" id="HGNC:29821"/>
<dbReference type="CTD" id="51477"/>
<dbReference type="DisGeNET" id="51477"/>
<dbReference type="GeneCards" id="ISYNA1"/>
<dbReference type="HGNC" id="HGNC:29821">
    <property type="gene designation" value="ISYNA1"/>
</dbReference>
<dbReference type="HPA" id="ENSG00000105655">
    <property type="expression patterns" value="Tissue enhanced (choroid plexus, testis)"/>
</dbReference>
<dbReference type="MIM" id="611670">
    <property type="type" value="gene"/>
</dbReference>
<dbReference type="neXtProt" id="NX_Q9NPH2"/>
<dbReference type="OpenTargets" id="ENSG00000105655"/>
<dbReference type="PharmGKB" id="PA164721116"/>
<dbReference type="VEuPathDB" id="HostDB:ENSG00000105655"/>
<dbReference type="eggNOG" id="KOG0693">
    <property type="taxonomic scope" value="Eukaryota"/>
</dbReference>
<dbReference type="GeneTree" id="ENSGT00390000018395"/>
<dbReference type="HOGENOM" id="CLU_021486_2_1_1"/>
<dbReference type="InParanoid" id="Q9NPH2"/>
<dbReference type="OMA" id="VYVPMKE"/>
<dbReference type="OrthoDB" id="2887at2759"/>
<dbReference type="PAN-GO" id="Q9NPH2">
    <property type="GO annotations" value="3 GO annotations based on evolutionary models"/>
</dbReference>
<dbReference type="PhylomeDB" id="Q9NPH2"/>
<dbReference type="TreeFam" id="TF300382"/>
<dbReference type="BRENDA" id="5.5.1.4">
    <property type="organism ID" value="2681"/>
</dbReference>
<dbReference type="PathwayCommons" id="Q9NPH2"/>
<dbReference type="Reactome" id="R-HSA-1855183">
    <property type="pathway name" value="Synthesis of IP2, IP, and Ins in the cytosol"/>
</dbReference>
<dbReference type="SignaLink" id="Q9NPH2"/>
<dbReference type="SIGNOR" id="Q9NPH2"/>
<dbReference type="UniPathway" id="UPA00823">
    <property type="reaction ID" value="UER00787"/>
</dbReference>
<dbReference type="BioGRID-ORCS" id="51477">
    <property type="hits" value="56 hits in 1162 CRISPR screens"/>
</dbReference>
<dbReference type="ChiTaRS" id="ISYNA1">
    <property type="organism name" value="human"/>
</dbReference>
<dbReference type="GenomeRNAi" id="51477"/>
<dbReference type="Pharos" id="Q9NPH2">
    <property type="development level" value="Tbio"/>
</dbReference>
<dbReference type="PRO" id="PR:Q9NPH2"/>
<dbReference type="Proteomes" id="UP000005640">
    <property type="component" value="Chromosome 19"/>
</dbReference>
<dbReference type="RNAct" id="Q9NPH2">
    <property type="molecule type" value="protein"/>
</dbReference>
<dbReference type="Bgee" id="ENSG00000105655">
    <property type="expression patterns" value="Expressed in right testis and 182 other cell types or tissues"/>
</dbReference>
<dbReference type="ExpressionAtlas" id="Q9NPH2">
    <property type="expression patterns" value="baseline and differential"/>
</dbReference>
<dbReference type="GO" id="GO:0005737">
    <property type="term" value="C:cytoplasm"/>
    <property type="evidence" value="ECO:0000318"/>
    <property type="project" value="GO_Central"/>
</dbReference>
<dbReference type="GO" id="GO:0005829">
    <property type="term" value="C:cytosol"/>
    <property type="evidence" value="ECO:0000304"/>
    <property type="project" value="Reactome"/>
</dbReference>
<dbReference type="GO" id="GO:0004512">
    <property type="term" value="F:inositol-3-phosphate synthase activity"/>
    <property type="evidence" value="ECO:0000315"/>
    <property type="project" value="CACAO"/>
</dbReference>
<dbReference type="GO" id="GO:0006021">
    <property type="term" value="P:inositol biosynthetic process"/>
    <property type="evidence" value="ECO:0000316"/>
    <property type="project" value="UniProtKB"/>
</dbReference>
<dbReference type="GO" id="GO:0008654">
    <property type="term" value="P:phospholipid biosynthetic process"/>
    <property type="evidence" value="ECO:0007669"/>
    <property type="project" value="UniProtKB-KW"/>
</dbReference>
<dbReference type="FunFam" id="3.40.50.720:FF:000069">
    <property type="entry name" value="Inositol-3-phosphate synthase 1"/>
    <property type="match status" value="1"/>
</dbReference>
<dbReference type="FunFam" id="3.40.50.720:FF:000171">
    <property type="entry name" value="inositol-3-phosphate synthase 1"/>
    <property type="match status" value="1"/>
</dbReference>
<dbReference type="Gene3D" id="3.40.50.720">
    <property type="entry name" value="NAD(P)-binding Rossmann-like Domain"/>
    <property type="match status" value="2"/>
</dbReference>
<dbReference type="InterPro" id="IPR002587">
    <property type="entry name" value="Myo-inos-1-P_Synthase"/>
</dbReference>
<dbReference type="InterPro" id="IPR013021">
    <property type="entry name" value="Myo-inos-1-P_Synthase_GAPDH"/>
</dbReference>
<dbReference type="InterPro" id="IPR036291">
    <property type="entry name" value="NAD(P)-bd_dom_sf"/>
</dbReference>
<dbReference type="PANTHER" id="PTHR11510">
    <property type="entry name" value="MYO-INOSITOL-1 PHOSPHATE SYNTHASE"/>
    <property type="match status" value="1"/>
</dbReference>
<dbReference type="Pfam" id="PF01658">
    <property type="entry name" value="Inos-1-P_synth"/>
    <property type="match status" value="1"/>
</dbReference>
<dbReference type="Pfam" id="PF07994">
    <property type="entry name" value="NAD_binding_5"/>
    <property type="match status" value="1"/>
</dbReference>
<dbReference type="PIRSF" id="PIRSF015578">
    <property type="entry name" value="Myoinos-ppht_syn"/>
    <property type="match status" value="1"/>
</dbReference>
<dbReference type="SUPFAM" id="SSF55347">
    <property type="entry name" value="Glyceraldehyde-3-phosphate dehydrogenase-like, C-terminal domain"/>
    <property type="match status" value="1"/>
</dbReference>
<dbReference type="SUPFAM" id="SSF51735">
    <property type="entry name" value="NAD(P)-binding Rossmann-fold domains"/>
    <property type="match status" value="1"/>
</dbReference>
<keyword id="KW-0025">Alternative splicing</keyword>
<keyword id="KW-0963">Cytoplasm</keyword>
<keyword id="KW-0398">Inositol biosynthesis</keyword>
<keyword id="KW-0413">Isomerase</keyword>
<keyword id="KW-0444">Lipid biosynthesis</keyword>
<keyword id="KW-0443">Lipid metabolism</keyword>
<keyword id="KW-0520">NAD</keyword>
<keyword id="KW-0594">Phospholipid biosynthesis</keyword>
<keyword id="KW-1208">Phospholipid metabolism</keyword>
<keyword id="KW-0597">Phosphoprotein</keyword>
<keyword id="KW-1267">Proteomics identification</keyword>
<keyword id="KW-1185">Reference proteome</keyword>
<protein>
    <recommendedName>
        <fullName>Inositol-3-phosphate synthase 1</fullName>
        <shortName>IPS 1</shortName>
        <ecNumber evidence="4 8">5.5.1.4</ecNumber>
    </recommendedName>
    <alternativeName>
        <fullName>Myo-inositol 1-phosphate synthase</fullName>
        <shortName>MI-1-P synthase</shortName>
        <shortName>MIP synthase</shortName>
        <shortName>hIPS</shortName>
    </alternativeName>
    <alternativeName>
        <fullName>Myo-inositol 1-phosphate synthase A1</fullName>
        <shortName>hINO1</shortName>
    </alternativeName>
</protein>
<name>INO1_HUMAN</name>
<comment type="function">
    <text evidence="4 8">Key enzyme in myo-inositol biosynthesis pathway that catalyzes the conversion of glucose 6-phosphate to 1-myo-inositol 1-phosphate in a NAD-dependent manner (PubMed:15024000, PubMed:23902760). Rate-limiting enzyme in the synthesis of all inositol-containing compounds (PubMed:15024000).</text>
</comment>
<comment type="catalytic activity">
    <reaction evidence="4 8">
        <text>D-glucose 6-phosphate = 1D-myo-inositol 3-phosphate</text>
        <dbReference type="Rhea" id="RHEA:10716"/>
        <dbReference type="ChEBI" id="CHEBI:58401"/>
        <dbReference type="ChEBI" id="CHEBI:61548"/>
        <dbReference type="EC" id="5.5.1.4"/>
    </reaction>
</comment>
<comment type="cofactor">
    <cofactor evidence="4">
        <name>NAD(+)</name>
        <dbReference type="ChEBI" id="CHEBI:57540"/>
    </cofactor>
</comment>
<comment type="activity regulation">
    <text evidence="6 7">Inhibited by mood-stabilizing drugs such as valproate (VPA) and lithium.</text>
</comment>
<comment type="biophysicochemical properties">
    <kinetics>
        <KM evidence="4">0.57 mM for 6-phosphate</KM>
        <KM evidence="4">8 uM for NAD</KM>
    </kinetics>
    <phDependence>
        <text evidence="4">Optimum pH is 8.0.</text>
    </phDependence>
</comment>
<comment type="pathway">
    <text>Polyol metabolism; myo-inositol biosynthesis; myo-inositol from D-glucose 6-phosphate: step 1/2.</text>
</comment>
<comment type="interaction">
    <interactant intactId="EBI-720563">
        <id>Q9NPH2</id>
    </interactant>
    <interactant intactId="EBI-3867333">
        <id>A8MQ03</id>
        <label>CYSRT1</label>
    </interactant>
    <organismsDiffer>false</organismsDiffer>
    <experiments>3</experiments>
</comment>
<comment type="interaction">
    <interactant intactId="EBI-720563">
        <id>Q9NPH2</id>
    </interactant>
    <interactant intactId="EBI-752420">
        <id>Q9NUX5</id>
        <label>POT1</label>
    </interactant>
    <organismsDiffer>false</organismsDiffer>
    <experiments>2</experiments>
</comment>
<comment type="interaction">
    <interactant intactId="EBI-720563">
        <id>Q9NPH2</id>
    </interactant>
    <interactant intactId="EBI-3650647">
        <id>Q9BUZ4</id>
        <label>TRAF4</label>
    </interactant>
    <organismsDiffer>false</organismsDiffer>
    <experiments>6</experiments>
</comment>
<comment type="subcellular location">
    <subcellularLocation>
        <location evidence="1">Cytoplasm</location>
    </subcellularLocation>
</comment>
<comment type="alternative products">
    <event type="alternative splicing"/>
    <isoform>
        <id>Q9NPH2-1</id>
        <name>1</name>
        <sequence type="displayed"/>
    </isoform>
    <isoform>
        <id>Q9NPH2-2</id>
        <name>2</name>
        <sequence type="described" ref="VSP_032324"/>
    </isoform>
    <isoform>
        <id>Q9NPH2-3</id>
        <name>3</name>
        <sequence type="described" ref="VSP_046065"/>
    </isoform>
</comment>
<comment type="tissue specificity">
    <text evidence="3">Highly expressed in testis, ovary, heart, placenta and pancreas. Weakly expressed in blood leukocyte, thymus, skeletal muscle and colon.</text>
</comment>
<comment type="induction">
    <text evidence="3 5">By glucose and lovastain. Up-regulation is prevented by mevalonic acid, farnesol, and geranylgeraniol. Up-regulated by E2F1.</text>
</comment>
<comment type="PTM">
    <text evidence="8">Phosphorylation at Ser-279 and Ser-357 may be associated with a decrease in activity.</text>
</comment>
<comment type="similarity">
    <text evidence="11">Belongs to the myo-inositol 1-phosphate synthase family.</text>
</comment>
<comment type="sequence caution" evidence="11">
    <conflict type="frameshift">
        <sequence resource="EMBL-CDS" id="AAP97151"/>
    </conflict>
</comment>
<sequence>MEAAAQFFVESPDVVYGPEAIEAQYEYRTTRVSREGGVLKVHPTSTRFTFRTARQVPRLGVMLVGWGGNNGSTLTAAVLANRLRLSWPTRSGRKEANYYGSLTQAGTVSLGLDAEGQEVFVPFSAVLPMVAPNDLVFDGWDISSLNLAEAMRRAKVLDWGLQEQLWPHMEALRPRPSVYIPEFIAANQSARADNLIPGSRAQQLEQIRRDIRDFRSSAGLDKVIVLWTANTERFCEVIPGLNDTAENLLRTIELGLEVSPSTLFAVASILEGCAFLNGSPQNTLVPGALELAWQHRVFVGGDDFKSGQTKVKSVLVDFLIGSGLKTMSIVSYNHLGNNDGENLSAPLQFRSKEVSKSNVVDDMVQSNPVLYTPGEEPDHCVVIKYVPYVGDSKRALDEYTSELMLGGTNTLVLHNTCEDSLLAAPIMLDLALLTELCQRVSFCTDMDPEPQTFHPVLSLLSFLFKAPLVPPGSPVVNALFRQRSCIENILRACVGLPPQNHMLLEHKMERPGPSLKRVGPVAATYPMLNKKGPVPAATNGCTGDANGHLQEEPPMPTT</sequence>
<organism>
    <name type="scientific">Homo sapiens</name>
    <name type="common">Human</name>
    <dbReference type="NCBI Taxonomy" id="9606"/>
    <lineage>
        <taxon>Eukaryota</taxon>
        <taxon>Metazoa</taxon>
        <taxon>Chordata</taxon>
        <taxon>Craniata</taxon>
        <taxon>Vertebrata</taxon>
        <taxon>Euteleostomi</taxon>
        <taxon>Mammalia</taxon>
        <taxon>Eutheria</taxon>
        <taxon>Euarchontoglires</taxon>
        <taxon>Primates</taxon>
        <taxon>Haplorrhini</taxon>
        <taxon>Catarrhini</taxon>
        <taxon>Hominidae</taxon>
        <taxon>Homo</taxon>
    </lineage>
</organism>
<evidence type="ECO:0000250" key="1">
    <source>
        <dbReference type="UniProtKB" id="P11986"/>
    </source>
</evidence>
<evidence type="ECO:0000256" key="2">
    <source>
        <dbReference type="SAM" id="MobiDB-lite"/>
    </source>
</evidence>
<evidence type="ECO:0000269" key="3">
    <source>
    </source>
</evidence>
<evidence type="ECO:0000269" key="4">
    <source>
    </source>
</evidence>
<evidence type="ECO:0000269" key="5">
    <source>
    </source>
</evidence>
<evidence type="ECO:0000269" key="6">
    <source>
    </source>
</evidence>
<evidence type="ECO:0000269" key="7">
    <source>
    </source>
</evidence>
<evidence type="ECO:0000269" key="8">
    <source>
    </source>
</evidence>
<evidence type="ECO:0000303" key="9">
    <source>
    </source>
</evidence>
<evidence type="ECO:0000303" key="10">
    <source>
    </source>
</evidence>
<evidence type="ECO:0000305" key="11"/>
<gene>
    <name type="primary">ISYNA1</name>
    <name type="synonym">INO1</name>
</gene>
<reference key="1">
    <citation type="journal article" date="2003" name="Arch. Biochem. Biophys.">
        <title>cDNA cloning and gene expression analysis of human myo-inositol 1-phosphate synthase.</title>
        <authorList>
            <person name="Guan G."/>
            <person name="Dai P."/>
            <person name="Shechter I."/>
        </authorList>
    </citation>
    <scope>NUCLEOTIDE SEQUENCE [MRNA] (ISOFORM 1)</scope>
    <scope>TISSUE SPECIFICITY</scope>
    <scope>INDUCTION</scope>
    <source>
        <tissue>Hepatoma</tissue>
    </source>
</reference>
<reference key="2">
    <citation type="journal article" date="2006" name="Subcell. Biochem.">
        <title>Mammalian inositol 3-phosphate synthase: its role in the biosynthesis of brain inositol and its clinical use as a psychoactive agent.</title>
        <authorList>
            <person name="Parthasarathy L.K."/>
            <person name="Seelan R.S."/>
            <person name="Tobias C."/>
            <person name="Casanova M.F."/>
            <person name="Parthasarathy R.N."/>
        </authorList>
    </citation>
    <scope>NUCLEOTIDE SEQUENCE [GENOMIC DNA / MRNA] (ISOFORM 1)</scope>
</reference>
<reference key="3">
    <citation type="submission" date="2003-07" db="EMBL/GenBank/DDBJ databases">
        <title>Cloning of a novel human cDNA homology to S.polyrrhiza D-myo-inositol-3-phosphate synthase mRNA.</title>
        <authorList>
            <person name="Zhou Y."/>
            <person name="Yu L."/>
            <person name="Zhao E.P."/>
            <person name="Hua Y.M."/>
            <person name="Xin Y.R."/>
            <person name="Zhao S.Y."/>
        </authorList>
    </citation>
    <scope>NUCLEOTIDE SEQUENCE [MRNA] (ISOFORM 1)</scope>
</reference>
<reference key="4">
    <citation type="journal article" date="2004" name="Nat. Genet.">
        <title>Complete sequencing and characterization of 21,243 full-length human cDNAs.</title>
        <authorList>
            <person name="Ota T."/>
            <person name="Suzuki Y."/>
            <person name="Nishikawa T."/>
            <person name="Otsuki T."/>
            <person name="Sugiyama T."/>
            <person name="Irie R."/>
            <person name="Wakamatsu A."/>
            <person name="Hayashi K."/>
            <person name="Sato H."/>
            <person name="Nagai K."/>
            <person name="Kimura K."/>
            <person name="Makita H."/>
            <person name="Sekine M."/>
            <person name="Obayashi M."/>
            <person name="Nishi T."/>
            <person name="Shibahara T."/>
            <person name="Tanaka T."/>
            <person name="Ishii S."/>
            <person name="Yamamoto J."/>
            <person name="Saito K."/>
            <person name="Kawai Y."/>
            <person name="Isono Y."/>
            <person name="Nakamura Y."/>
            <person name="Nagahari K."/>
            <person name="Murakami K."/>
            <person name="Yasuda T."/>
            <person name="Iwayanagi T."/>
            <person name="Wagatsuma M."/>
            <person name="Shiratori A."/>
            <person name="Sudo H."/>
            <person name="Hosoiri T."/>
            <person name="Kaku Y."/>
            <person name="Kodaira H."/>
            <person name="Kondo H."/>
            <person name="Sugawara M."/>
            <person name="Takahashi M."/>
            <person name="Kanda K."/>
            <person name="Yokoi T."/>
            <person name="Furuya T."/>
            <person name="Kikkawa E."/>
            <person name="Omura Y."/>
            <person name="Abe K."/>
            <person name="Kamihara K."/>
            <person name="Katsuta N."/>
            <person name="Sato K."/>
            <person name="Tanikawa M."/>
            <person name="Yamazaki M."/>
            <person name="Ninomiya K."/>
            <person name="Ishibashi T."/>
            <person name="Yamashita H."/>
            <person name="Murakawa K."/>
            <person name="Fujimori K."/>
            <person name="Tanai H."/>
            <person name="Kimata M."/>
            <person name="Watanabe M."/>
            <person name="Hiraoka S."/>
            <person name="Chiba Y."/>
            <person name="Ishida S."/>
            <person name="Ono Y."/>
            <person name="Takiguchi S."/>
            <person name="Watanabe S."/>
            <person name="Yosida M."/>
            <person name="Hotuta T."/>
            <person name="Kusano J."/>
            <person name="Kanehori K."/>
            <person name="Takahashi-Fujii A."/>
            <person name="Hara H."/>
            <person name="Tanase T.-O."/>
            <person name="Nomura Y."/>
            <person name="Togiya S."/>
            <person name="Komai F."/>
            <person name="Hara R."/>
            <person name="Takeuchi K."/>
            <person name="Arita M."/>
            <person name="Imose N."/>
            <person name="Musashino K."/>
            <person name="Yuuki H."/>
            <person name="Oshima A."/>
            <person name="Sasaki N."/>
            <person name="Aotsuka S."/>
            <person name="Yoshikawa Y."/>
            <person name="Matsunawa H."/>
            <person name="Ichihara T."/>
            <person name="Shiohata N."/>
            <person name="Sano S."/>
            <person name="Moriya S."/>
            <person name="Momiyama H."/>
            <person name="Satoh N."/>
            <person name="Takami S."/>
            <person name="Terashima Y."/>
            <person name="Suzuki O."/>
            <person name="Nakagawa S."/>
            <person name="Senoh A."/>
            <person name="Mizoguchi H."/>
            <person name="Goto Y."/>
            <person name="Shimizu F."/>
            <person name="Wakebe H."/>
            <person name="Hishigaki H."/>
            <person name="Watanabe T."/>
            <person name="Sugiyama A."/>
            <person name="Takemoto M."/>
            <person name="Kawakami B."/>
            <person name="Yamazaki M."/>
            <person name="Watanabe K."/>
            <person name="Kumagai A."/>
            <person name="Itakura S."/>
            <person name="Fukuzumi Y."/>
            <person name="Fujimori Y."/>
            <person name="Komiyama M."/>
            <person name="Tashiro H."/>
            <person name="Tanigami A."/>
            <person name="Fujiwara T."/>
            <person name="Ono T."/>
            <person name="Yamada K."/>
            <person name="Fujii Y."/>
            <person name="Ozaki K."/>
            <person name="Hirao M."/>
            <person name="Ohmori Y."/>
            <person name="Kawabata A."/>
            <person name="Hikiji T."/>
            <person name="Kobatake N."/>
            <person name="Inagaki H."/>
            <person name="Ikema Y."/>
            <person name="Okamoto S."/>
            <person name="Okitani R."/>
            <person name="Kawakami T."/>
            <person name="Noguchi S."/>
            <person name="Itoh T."/>
            <person name="Shigeta K."/>
            <person name="Senba T."/>
            <person name="Matsumura K."/>
            <person name="Nakajima Y."/>
            <person name="Mizuno T."/>
            <person name="Morinaga M."/>
            <person name="Sasaki M."/>
            <person name="Togashi T."/>
            <person name="Oyama M."/>
            <person name="Hata H."/>
            <person name="Watanabe M."/>
            <person name="Komatsu T."/>
            <person name="Mizushima-Sugano J."/>
            <person name="Satoh T."/>
            <person name="Shirai Y."/>
            <person name="Takahashi Y."/>
            <person name="Nakagawa K."/>
            <person name="Okumura K."/>
            <person name="Nagase T."/>
            <person name="Nomura N."/>
            <person name="Kikuchi H."/>
            <person name="Masuho Y."/>
            <person name="Yamashita R."/>
            <person name="Nakai K."/>
            <person name="Yada T."/>
            <person name="Nakamura Y."/>
            <person name="Ohara O."/>
            <person name="Isogai T."/>
            <person name="Sugano S."/>
        </authorList>
    </citation>
    <scope>NUCLEOTIDE SEQUENCE [LARGE SCALE MRNA] (ISOFORMS 1 AND 3)</scope>
    <source>
        <tissue>Embryo</tissue>
        <tissue>Teratocarcinoma</tissue>
    </source>
</reference>
<reference key="5">
    <citation type="journal article" date="2007" name="BMC Genomics">
        <title>The full-ORF clone resource of the German cDNA consortium.</title>
        <authorList>
            <person name="Bechtel S."/>
            <person name="Rosenfelder H."/>
            <person name="Duda A."/>
            <person name="Schmidt C.P."/>
            <person name="Ernst U."/>
            <person name="Wellenreuther R."/>
            <person name="Mehrle A."/>
            <person name="Schuster C."/>
            <person name="Bahr A."/>
            <person name="Bloecker H."/>
            <person name="Heubner D."/>
            <person name="Hoerlein A."/>
            <person name="Michel G."/>
            <person name="Wedler H."/>
            <person name="Koehrer K."/>
            <person name="Ottenwaelder B."/>
            <person name="Poustka A."/>
            <person name="Wiemann S."/>
            <person name="Schupp I."/>
        </authorList>
    </citation>
    <scope>NUCLEOTIDE SEQUENCE [LARGE SCALE MRNA] (ISOFORM 2)</scope>
    <source>
        <tissue>Testis</tissue>
    </source>
</reference>
<reference key="6">
    <citation type="journal article" date="2004" name="Nature">
        <title>The DNA sequence and biology of human chromosome 19.</title>
        <authorList>
            <person name="Grimwood J."/>
            <person name="Gordon L.A."/>
            <person name="Olsen A.S."/>
            <person name="Terry A."/>
            <person name="Schmutz J."/>
            <person name="Lamerdin J.E."/>
            <person name="Hellsten U."/>
            <person name="Goodstein D."/>
            <person name="Couronne O."/>
            <person name="Tran-Gyamfi M."/>
            <person name="Aerts A."/>
            <person name="Altherr M."/>
            <person name="Ashworth L."/>
            <person name="Bajorek E."/>
            <person name="Black S."/>
            <person name="Branscomb E."/>
            <person name="Caenepeel S."/>
            <person name="Carrano A.V."/>
            <person name="Caoile C."/>
            <person name="Chan Y.M."/>
            <person name="Christensen M."/>
            <person name="Cleland C.A."/>
            <person name="Copeland A."/>
            <person name="Dalin E."/>
            <person name="Dehal P."/>
            <person name="Denys M."/>
            <person name="Detter J.C."/>
            <person name="Escobar J."/>
            <person name="Flowers D."/>
            <person name="Fotopulos D."/>
            <person name="Garcia C."/>
            <person name="Georgescu A.M."/>
            <person name="Glavina T."/>
            <person name="Gomez M."/>
            <person name="Gonzales E."/>
            <person name="Groza M."/>
            <person name="Hammon N."/>
            <person name="Hawkins T."/>
            <person name="Haydu L."/>
            <person name="Ho I."/>
            <person name="Huang W."/>
            <person name="Israni S."/>
            <person name="Jett J."/>
            <person name="Kadner K."/>
            <person name="Kimball H."/>
            <person name="Kobayashi A."/>
            <person name="Larionov V."/>
            <person name="Leem S.-H."/>
            <person name="Lopez F."/>
            <person name="Lou Y."/>
            <person name="Lowry S."/>
            <person name="Malfatti S."/>
            <person name="Martinez D."/>
            <person name="McCready P.M."/>
            <person name="Medina C."/>
            <person name="Morgan J."/>
            <person name="Nelson K."/>
            <person name="Nolan M."/>
            <person name="Ovcharenko I."/>
            <person name="Pitluck S."/>
            <person name="Pollard M."/>
            <person name="Popkie A.P."/>
            <person name="Predki P."/>
            <person name="Quan G."/>
            <person name="Ramirez L."/>
            <person name="Rash S."/>
            <person name="Retterer J."/>
            <person name="Rodriguez A."/>
            <person name="Rogers S."/>
            <person name="Salamov A."/>
            <person name="Salazar A."/>
            <person name="She X."/>
            <person name="Smith D."/>
            <person name="Slezak T."/>
            <person name="Solovyev V."/>
            <person name="Thayer N."/>
            <person name="Tice H."/>
            <person name="Tsai M."/>
            <person name="Ustaszewska A."/>
            <person name="Vo N."/>
            <person name="Wagner M."/>
            <person name="Wheeler J."/>
            <person name="Wu K."/>
            <person name="Xie G."/>
            <person name="Yang J."/>
            <person name="Dubchak I."/>
            <person name="Furey T.S."/>
            <person name="DeJong P."/>
            <person name="Dickson M."/>
            <person name="Gordon D."/>
            <person name="Eichler E.E."/>
            <person name="Pennacchio L.A."/>
            <person name="Richardson P."/>
            <person name="Stubbs L."/>
            <person name="Rokhsar D.S."/>
            <person name="Myers R.M."/>
            <person name="Rubin E.M."/>
            <person name="Lucas S.M."/>
        </authorList>
    </citation>
    <scope>NUCLEOTIDE SEQUENCE [LARGE SCALE GENOMIC DNA]</scope>
</reference>
<reference key="7">
    <citation type="submission" date="2005-07" db="EMBL/GenBank/DDBJ databases">
        <authorList>
            <person name="Mural R.J."/>
            <person name="Istrail S."/>
            <person name="Sutton G.G."/>
            <person name="Florea L."/>
            <person name="Halpern A.L."/>
            <person name="Mobarry C.M."/>
            <person name="Lippert R."/>
            <person name="Walenz B."/>
            <person name="Shatkay H."/>
            <person name="Dew I."/>
            <person name="Miller J.R."/>
            <person name="Flanigan M.J."/>
            <person name="Edwards N.J."/>
            <person name="Bolanos R."/>
            <person name="Fasulo D."/>
            <person name="Halldorsson B.V."/>
            <person name="Hannenhalli S."/>
            <person name="Turner R."/>
            <person name="Yooseph S."/>
            <person name="Lu F."/>
            <person name="Nusskern D.R."/>
            <person name="Shue B.C."/>
            <person name="Zheng X.H."/>
            <person name="Zhong F."/>
            <person name="Delcher A.L."/>
            <person name="Huson D.H."/>
            <person name="Kravitz S.A."/>
            <person name="Mouchard L."/>
            <person name="Reinert K."/>
            <person name="Remington K.A."/>
            <person name="Clark A.G."/>
            <person name="Waterman M.S."/>
            <person name="Eichler E.E."/>
            <person name="Adams M.D."/>
            <person name="Hunkapiller M.W."/>
            <person name="Myers E.W."/>
            <person name="Venter J.C."/>
        </authorList>
    </citation>
    <scope>NUCLEOTIDE SEQUENCE [LARGE SCALE GENOMIC DNA]</scope>
</reference>
<reference key="8">
    <citation type="journal article" date="2004" name="Genome Res.">
        <title>The status, quality, and expansion of the NIH full-length cDNA project: the Mammalian Gene Collection (MGC).</title>
        <authorList>
            <consortium name="The MGC Project Team"/>
        </authorList>
    </citation>
    <scope>NUCLEOTIDE SEQUENCE [LARGE SCALE MRNA] (ISOFORM 1)</scope>
    <source>
        <tissue>Brain</tissue>
        <tissue>Uterus</tissue>
    </source>
</reference>
<reference key="9">
    <citation type="journal article" date="2004" name="Arch. Biochem. Biophys.">
        <title>E2F1 regulation of the human myo-inositol 1-phosphate synthase (ISYNA1) gene promoter.</title>
        <authorList>
            <person name="Seelan R.S."/>
            <person name="Parthasarathy L.K."/>
            <person name="Parthasarathy R.N."/>
        </authorList>
    </citation>
    <scope>INDUCTION</scope>
</reference>
<reference key="10">
    <citation type="journal article" date="2004" name="J. Biol. Chem.">
        <title>Human 1-D-myo-inositol-3-phosphate synthase is functional in yeast.</title>
        <authorList>
            <person name="Ju S."/>
            <person name="Shaltiel G."/>
            <person name="Shamir A."/>
            <person name="Agam G."/>
            <person name="Greenberg M.L."/>
        </authorList>
    </citation>
    <scope>FUNCTION</scope>
    <scope>ENZYME ACTIVITY</scope>
    <scope>COFACTOR</scope>
    <scope>BIOPHYSICOCHEMICAL PROPERTIES</scope>
</reference>
<reference key="11">
    <citation type="journal article" date="2007" name="Bipolar Disord.">
        <title>Human MIP synthase splice variants in bipolar disorder.</title>
        <authorList>
            <person name="Shamir A."/>
            <person name="Shaltiel G."/>
            <person name="Mark S."/>
            <person name="Bersudsky Y."/>
            <person name="Belmaker R.H."/>
            <person name="Agam G."/>
        </authorList>
    </citation>
    <scope>ACTIVITY REGULATION</scope>
</reference>
<reference key="12">
    <citation type="journal article" date="2007" name="Pharmacol. Rep.">
        <title>Effects of valproate derivatives on human brain myo-inositol-1-phosphate (MIP) synthase activity and amphetamine-induced rearing.</title>
        <authorList>
            <person name="Galit S."/>
            <person name="Shirley M."/>
            <person name="Ora K."/>
            <person name="Belmaker R.H."/>
            <person name="Galila A."/>
        </authorList>
    </citation>
    <scope>ACTIVITY REGULATION</scope>
</reference>
<reference key="13">
    <citation type="journal article" date="2011" name="BMC Syst. Biol.">
        <title>Initial characterization of the human central proteome.</title>
        <authorList>
            <person name="Burkard T.R."/>
            <person name="Planyavsky M."/>
            <person name="Kaupe I."/>
            <person name="Breitwieser F.P."/>
            <person name="Buerckstuemmer T."/>
            <person name="Bennett K.L."/>
            <person name="Superti-Furga G."/>
            <person name="Colinge J."/>
        </authorList>
    </citation>
    <scope>IDENTIFICATION BY MASS SPECTROMETRY [LARGE SCALE ANALYSIS]</scope>
</reference>
<reference key="14">
    <citation type="journal article" date="2013" name="J. Biol. Chem.">
        <title>Phosphorylation regulates myo-inositol-3-phosphate synthase: a novel regulatory mechanism of inositol biosynthesis.</title>
        <authorList>
            <person name="Deranieh R.M."/>
            <person name="He Q."/>
            <person name="Caruso J.A."/>
            <person name="Greenberg M.L."/>
        </authorList>
    </citation>
    <scope>FUNCTION</scope>
    <scope>CATALYTIC ACTIVITY</scope>
    <scope>PHOSPHORYLATION AT SER-279 AND SER-357</scope>
    <scope>MUTAGENESIS OF SER-177; SER-279 AND SER-357</scope>
</reference>